<keyword id="KW-0349">Heme</keyword>
<keyword id="KW-0408">Iron</keyword>
<keyword id="KW-0479">Metal-binding</keyword>
<keyword id="KW-0561">Oxygen transport</keyword>
<keyword id="KW-0597">Phosphoprotein</keyword>
<keyword id="KW-0813">Transport</keyword>
<proteinExistence type="evidence at transcript level"/>
<accession>Q45XI7</accession>
<feature type="chain" id="PRO_0000053176" description="Hemoglobin subunit delta">
    <location>
        <begin position="1"/>
        <end position="147"/>
    </location>
</feature>
<feature type="domain" description="Globin" evidence="2">
    <location>
        <begin position="3"/>
        <end position="147"/>
    </location>
</feature>
<feature type="binding site" description="distal binding residue">
    <location>
        <position position="64"/>
    </location>
    <ligand>
        <name>heme b</name>
        <dbReference type="ChEBI" id="CHEBI:60344"/>
    </ligand>
    <ligandPart>
        <name>Fe</name>
        <dbReference type="ChEBI" id="CHEBI:18248"/>
    </ligandPart>
</feature>
<feature type="binding site" description="proximal binding residue">
    <location>
        <position position="93"/>
    </location>
    <ligand>
        <name>heme b</name>
        <dbReference type="ChEBI" id="CHEBI:60344"/>
    </ligand>
    <ligandPart>
        <name>Fe</name>
        <dbReference type="ChEBI" id="CHEBI:18248"/>
    </ligandPart>
</feature>
<feature type="modified residue" description="Phosphoserine" evidence="1">
    <location>
        <position position="51"/>
    </location>
</feature>
<organism>
    <name type="scientific">Dugong dugon</name>
    <name type="common">Dugong</name>
    <name type="synonym">Trichechus dugon</name>
    <dbReference type="NCBI Taxonomy" id="29137"/>
    <lineage>
        <taxon>Eukaryota</taxon>
        <taxon>Metazoa</taxon>
        <taxon>Chordata</taxon>
        <taxon>Craniata</taxon>
        <taxon>Vertebrata</taxon>
        <taxon>Euteleostomi</taxon>
        <taxon>Mammalia</taxon>
        <taxon>Eutheria</taxon>
        <taxon>Afrotheria</taxon>
        <taxon>Sirenia</taxon>
        <taxon>Dugongidae</taxon>
        <taxon>Dugong</taxon>
    </lineage>
</organism>
<gene>
    <name type="primary">HBD</name>
</gene>
<reference key="1">
    <citation type="submission" date="2005-06" db="EMBL/GenBank/DDBJ databases">
        <title>Atypical molecular evolution of afrotherian and xenarthran beta-globin cluster genes.</title>
        <authorList>
            <person name="Sloan A.M."/>
            <person name="Campbell K.L."/>
        </authorList>
    </citation>
    <scope>NUCLEOTIDE SEQUENCE [GENOMIC DNA]</scope>
</reference>
<sequence length="147" mass="16077">MVHLTADETALVTGLWAKVNVKEYGGEALGRLLVVYPWTQRFFEHFGDLSSASAVMHNPKVKAHGEKVLASFGDGLKHLDDLKGAFAELSALHCEKSHVDPQNFKLLGNMLVCVLSRHLGKEFSPQAQAAYEKVVAGVANALAHKYH</sequence>
<name>HBD_DUGDU</name>
<evidence type="ECO:0000250" key="1">
    <source>
        <dbReference type="UniProtKB" id="P02042"/>
    </source>
</evidence>
<evidence type="ECO:0000255" key="2">
    <source>
        <dbReference type="PROSITE-ProRule" id="PRU00238"/>
    </source>
</evidence>
<dbReference type="EMBL" id="DQ091204">
    <property type="protein sequence ID" value="AAZ22677.1"/>
    <property type="molecule type" value="Genomic_DNA"/>
</dbReference>
<dbReference type="SMR" id="Q45XI7"/>
<dbReference type="GO" id="GO:0072562">
    <property type="term" value="C:blood microparticle"/>
    <property type="evidence" value="ECO:0007669"/>
    <property type="project" value="TreeGrafter"/>
</dbReference>
<dbReference type="GO" id="GO:0031838">
    <property type="term" value="C:haptoglobin-hemoglobin complex"/>
    <property type="evidence" value="ECO:0007669"/>
    <property type="project" value="TreeGrafter"/>
</dbReference>
<dbReference type="GO" id="GO:0005833">
    <property type="term" value="C:hemoglobin complex"/>
    <property type="evidence" value="ECO:0007669"/>
    <property type="project" value="InterPro"/>
</dbReference>
<dbReference type="GO" id="GO:0031720">
    <property type="term" value="F:haptoglobin binding"/>
    <property type="evidence" value="ECO:0007669"/>
    <property type="project" value="TreeGrafter"/>
</dbReference>
<dbReference type="GO" id="GO:0020037">
    <property type="term" value="F:heme binding"/>
    <property type="evidence" value="ECO:0007669"/>
    <property type="project" value="InterPro"/>
</dbReference>
<dbReference type="GO" id="GO:0031721">
    <property type="term" value="F:hemoglobin alpha binding"/>
    <property type="evidence" value="ECO:0007669"/>
    <property type="project" value="TreeGrafter"/>
</dbReference>
<dbReference type="GO" id="GO:0046872">
    <property type="term" value="F:metal ion binding"/>
    <property type="evidence" value="ECO:0007669"/>
    <property type="project" value="UniProtKB-KW"/>
</dbReference>
<dbReference type="GO" id="GO:0043177">
    <property type="term" value="F:organic acid binding"/>
    <property type="evidence" value="ECO:0007669"/>
    <property type="project" value="TreeGrafter"/>
</dbReference>
<dbReference type="GO" id="GO:0019825">
    <property type="term" value="F:oxygen binding"/>
    <property type="evidence" value="ECO:0007669"/>
    <property type="project" value="InterPro"/>
</dbReference>
<dbReference type="GO" id="GO:0005344">
    <property type="term" value="F:oxygen carrier activity"/>
    <property type="evidence" value="ECO:0007669"/>
    <property type="project" value="UniProtKB-KW"/>
</dbReference>
<dbReference type="GO" id="GO:0004601">
    <property type="term" value="F:peroxidase activity"/>
    <property type="evidence" value="ECO:0007669"/>
    <property type="project" value="TreeGrafter"/>
</dbReference>
<dbReference type="GO" id="GO:0042744">
    <property type="term" value="P:hydrogen peroxide catabolic process"/>
    <property type="evidence" value="ECO:0007669"/>
    <property type="project" value="TreeGrafter"/>
</dbReference>
<dbReference type="CDD" id="cd08925">
    <property type="entry name" value="Hb-beta-like"/>
    <property type="match status" value="1"/>
</dbReference>
<dbReference type="FunFam" id="1.10.490.10:FF:000001">
    <property type="entry name" value="Hemoglobin subunit beta"/>
    <property type="match status" value="1"/>
</dbReference>
<dbReference type="Gene3D" id="1.10.490.10">
    <property type="entry name" value="Globins"/>
    <property type="match status" value="1"/>
</dbReference>
<dbReference type="InterPro" id="IPR000971">
    <property type="entry name" value="Globin"/>
</dbReference>
<dbReference type="InterPro" id="IPR009050">
    <property type="entry name" value="Globin-like_sf"/>
</dbReference>
<dbReference type="InterPro" id="IPR012292">
    <property type="entry name" value="Globin/Proto"/>
</dbReference>
<dbReference type="InterPro" id="IPR002337">
    <property type="entry name" value="Hemoglobin_b"/>
</dbReference>
<dbReference type="InterPro" id="IPR050056">
    <property type="entry name" value="Hemoglobin_oxygen_transport"/>
</dbReference>
<dbReference type="PANTHER" id="PTHR11442">
    <property type="entry name" value="HEMOGLOBIN FAMILY MEMBER"/>
    <property type="match status" value="1"/>
</dbReference>
<dbReference type="PANTHER" id="PTHR11442:SF42">
    <property type="entry name" value="HEMOGLOBIN SUBUNIT BETA"/>
    <property type="match status" value="1"/>
</dbReference>
<dbReference type="Pfam" id="PF00042">
    <property type="entry name" value="Globin"/>
    <property type="match status" value="1"/>
</dbReference>
<dbReference type="PRINTS" id="PR00814">
    <property type="entry name" value="BETAHAEM"/>
</dbReference>
<dbReference type="SUPFAM" id="SSF46458">
    <property type="entry name" value="Globin-like"/>
    <property type="match status" value="1"/>
</dbReference>
<dbReference type="PROSITE" id="PS01033">
    <property type="entry name" value="GLOBIN"/>
    <property type="match status" value="1"/>
</dbReference>
<comment type="subunit">
    <text>Heterotetramer of two delta chains and two alpha chains.</text>
</comment>
<comment type="tissue specificity">
    <text>Red blood cells.</text>
</comment>
<comment type="similarity">
    <text evidence="2">Belongs to the globin family.</text>
</comment>
<protein>
    <recommendedName>
        <fullName>Hemoglobin subunit delta</fullName>
    </recommendedName>
    <alternativeName>
        <fullName>Delta-globin</fullName>
    </alternativeName>
    <alternativeName>
        <fullName>Hemoglobin delta chain</fullName>
    </alternativeName>
</protein>